<protein>
    <recommendedName>
        <fullName evidence="5">Akirin-2</fullName>
    </recommendedName>
    <alternativeName>
        <fullName evidence="4">Fourteen-three-three beta interactant 1</fullName>
    </alternativeName>
    <alternativeName>
        <fullName evidence="4">Fourteen-three-three beta interacting-protein 1</fullName>
    </alternativeName>
</protein>
<proteinExistence type="evidence at protein level"/>
<gene>
    <name evidence="2" type="primary">Akirin2</name>
    <name evidence="4" type="synonym">FBI1</name>
</gene>
<organism>
    <name type="scientific">Rattus norvegicus</name>
    <name type="common">Rat</name>
    <dbReference type="NCBI Taxonomy" id="10116"/>
    <lineage>
        <taxon>Eukaryota</taxon>
        <taxon>Metazoa</taxon>
        <taxon>Chordata</taxon>
        <taxon>Craniata</taxon>
        <taxon>Vertebrata</taxon>
        <taxon>Euteleostomi</taxon>
        <taxon>Mammalia</taxon>
        <taxon>Eutheria</taxon>
        <taxon>Euarchontoglires</taxon>
        <taxon>Glires</taxon>
        <taxon>Rodentia</taxon>
        <taxon>Myomorpha</taxon>
        <taxon>Muroidea</taxon>
        <taxon>Muridae</taxon>
        <taxon>Murinae</taxon>
        <taxon>Rattus</taxon>
    </lineage>
</organism>
<dbReference type="EMBL" id="AB234867">
    <property type="protein sequence ID" value="BAE81786.1"/>
    <property type="molecule type" value="mRNA"/>
</dbReference>
<dbReference type="EMBL" id="CH473962">
    <property type="protein sequence ID" value="EDL98593.1"/>
    <property type="molecule type" value="Genomic_DNA"/>
</dbReference>
<dbReference type="RefSeq" id="NP_001035003.1">
    <property type="nucleotide sequence ID" value="NM_001039914.2"/>
</dbReference>
<dbReference type="SMR" id="Q25C79"/>
<dbReference type="FunCoup" id="Q25C79">
    <property type="interactions" value="4336"/>
</dbReference>
<dbReference type="IntAct" id="Q25C79">
    <property type="interactions" value="1"/>
</dbReference>
<dbReference type="MINT" id="Q25C79"/>
<dbReference type="STRING" id="10116.ENSRNOP00000010962"/>
<dbReference type="iPTMnet" id="Q25C79"/>
<dbReference type="PhosphoSitePlus" id="Q25C79"/>
<dbReference type="PaxDb" id="10116-ENSRNOP00000010962"/>
<dbReference type="Ensembl" id="ENSRNOT00000010962.5">
    <property type="protein sequence ID" value="ENSRNOP00000010962.4"/>
    <property type="gene ID" value="ENSRNOG00000008288.5"/>
</dbReference>
<dbReference type="GeneID" id="297968"/>
<dbReference type="KEGG" id="rno:297968"/>
<dbReference type="UCSC" id="RGD:1307791">
    <property type="organism name" value="rat"/>
</dbReference>
<dbReference type="AGR" id="RGD:1307791"/>
<dbReference type="CTD" id="55122"/>
<dbReference type="RGD" id="1307791">
    <property type="gene designation" value="Akirin2"/>
</dbReference>
<dbReference type="eggNOG" id="KOG4330">
    <property type="taxonomic scope" value="Eukaryota"/>
</dbReference>
<dbReference type="GeneTree" id="ENSGT00940000156096"/>
<dbReference type="HOGENOM" id="CLU_119227_0_0_1"/>
<dbReference type="InParanoid" id="Q25C79"/>
<dbReference type="OMA" id="QADGCCP"/>
<dbReference type="OrthoDB" id="87725at9989"/>
<dbReference type="PhylomeDB" id="Q25C79"/>
<dbReference type="TreeFam" id="TF317123"/>
<dbReference type="PRO" id="PR:Q25C79"/>
<dbReference type="Proteomes" id="UP000002494">
    <property type="component" value="Chromosome 5"/>
</dbReference>
<dbReference type="Proteomes" id="UP000234681">
    <property type="component" value="Chromosome 5"/>
</dbReference>
<dbReference type="Bgee" id="ENSRNOG00000008288">
    <property type="expression patterns" value="Expressed in testis and 19 other cell types or tissues"/>
</dbReference>
<dbReference type="GO" id="GO:0000785">
    <property type="term" value="C:chromatin"/>
    <property type="evidence" value="ECO:0000318"/>
    <property type="project" value="GO_Central"/>
</dbReference>
<dbReference type="GO" id="GO:0005737">
    <property type="term" value="C:cytoplasm"/>
    <property type="evidence" value="ECO:0000266"/>
    <property type="project" value="RGD"/>
</dbReference>
<dbReference type="GO" id="GO:0016020">
    <property type="term" value="C:membrane"/>
    <property type="evidence" value="ECO:0000266"/>
    <property type="project" value="RGD"/>
</dbReference>
<dbReference type="GO" id="GO:0005634">
    <property type="term" value="C:nucleus"/>
    <property type="evidence" value="ECO:0000314"/>
    <property type="project" value="UniProtKB"/>
</dbReference>
<dbReference type="GO" id="GO:0017053">
    <property type="term" value="C:transcription repressor complex"/>
    <property type="evidence" value="ECO:0000314"/>
    <property type="project" value="UniProtKB"/>
</dbReference>
<dbReference type="GO" id="GO:0019899">
    <property type="term" value="F:enzyme binding"/>
    <property type="evidence" value="ECO:0000266"/>
    <property type="project" value="RGD"/>
</dbReference>
<dbReference type="GO" id="GO:0042802">
    <property type="term" value="F:identical protein binding"/>
    <property type="evidence" value="ECO:0000266"/>
    <property type="project" value="RGD"/>
</dbReference>
<dbReference type="GO" id="GO:0030674">
    <property type="term" value="F:protein-macromolecule adaptor activity"/>
    <property type="evidence" value="ECO:0000250"/>
    <property type="project" value="UniProtKB"/>
</dbReference>
<dbReference type="GO" id="GO:0003712">
    <property type="term" value="F:transcription coregulator activity"/>
    <property type="evidence" value="ECO:0000318"/>
    <property type="project" value="GO_Central"/>
</dbReference>
<dbReference type="GO" id="GO:0002250">
    <property type="term" value="P:adaptive immune response"/>
    <property type="evidence" value="ECO:0007669"/>
    <property type="project" value="UniProtKB-KW"/>
</dbReference>
<dbReference type="GO" id="GO:0021987">
    <property type="term" value="P:cerebral cortex development"/>
    <property type="evidence" value="ECO:0000250"/>
    <property type="project" value="UniProtKB"/>
</dbReference>
<dbReference type="GO" id="GO:0042742">
    <property type="term" value="P:defense response to bacterium"/>
    <property type="evidence" value="ECO:0000250"/>
    <property type="project" value="UniProtKB"/>
</dbReference>
<dbReference type="GO" id="GO:0009792">
    <property type="term" value="P:embryo development ending in birth or egg hatching"/>
    <property type="evidence" value="ECO:0000266"/>
    <property type="project" value="RGD"/>
</dbReference>
<dbReference type="GO" id="GO:0045087">
    <property type="term" value="P:innate immune response"/>
    <property type="evidence" value="ECO:0007669"/>
    <property type="project" value="UniProtKB-KW"/>
</dbReference>
<dbReference type="GO" id="GO:0045892">
    <property type="term" value="P:negative regulation of DNA-templated transcription"/>
    <property type="evidence" value="ECO:0000314"/>
    <property type="project" value="RGD"/>
</dbReference>
<dbReference type="GO" id="GO:0010629">
    <property type="term" value="P:negative regulation of gene expression"/>
    <property type="evidence" value="ECO:0000315"/>
    <property type="project" value="RGD"/>
</dbReference>
<dbReference type="GO" id="GO:0000122">
    <property type="term" value="P:negative regulation of transcription by RNA polymerase II"/>
    <property type="evidence" value="ECO:0000314"/>
    <property type="project" value="RGD"/>
</dbReference>
<dbReference type="GO" id="GO:0071630">
    <property type="term" value="P:nuclear protein quality control by the ubiquitin-proteasome system"/>
    <property type="evidence" value="ECO:0000250"/>
    <property type="project" value="UniProtKB"/>
</dbReference>
<dbReference type="GO" id="GO:0002821">
    <property type="term" value="P:positive regulation of adaptive immune response"/>
    <property type="evidence" value="ECO:0000250"/>
    <property type="project" value="UniProtKB"/>
</dbReference>
<dbReference type="GO" id="GO:0050871">
    <property type="term" value="P:positive regulation of B cell activation"/>
    <property type="evidence" value="ECO:0000266"/>
    <property type="project" value="RGD"/>
</dbReference>
<dbReference type="GO" id="GO:0008284">
    <property type="term" value="P:positive regulation of cell population proliferation"/>
    <property type="evidence" value="ECO:0000315"/>
    <property type="project" value="RGD"/>
</dbReference>
<dbReference type="GO" id="GO:0045089">
    <property type="term" value="P:positive regulation of innate immune response"/>
    <property type="evidence" value="ECO:0000250"/>
    <property type="project" value="UniProtKB"/>
</dbReference>
<dbReference type="GO" id="GO:0032755">
    <property type="term" value="P:positive regulation of interleukin-6 production"/>
    <property type="evidence" value="ECO:0000250"/>
    <property type="project" value="UniProtKB"/>
</dbReference>
<dbReference type="GO" id="GO:0045944">
    <property type="term" value="P:positive regulation of transcription by RNA polymerase II"/>
    <property type="evidence" value="ECO:0000250"/>
    <property type="project" value="UniProtKB"/>
</dbReference>
<dbReference type="GO" id="GO:0031144">
    <property type="term" value="P:proteasome localization"/>
    <property type="evidence" value="ECO:0000250"/>
    <property type="project" value="UniProtKB"/>
</dbReference>
<dbReference type="GO" id="GO:0006606">
    <property type="term" value="P:protein import into nucleus"/>
    <property type="evidence" value="ECO:0000250"/>
    <property type="project" value="UniProtKB"/>
</dbReference>
<dbReference type="GO" id="GO:0051147">
    <property type="term" value="P:regulation of muscle cell differentiation"/>
    <property type="evidence" value="ECO:0000266"/>
    <property type="project" value="RGD"/>
</dbReference>
<dbReference type="GO" id="GO:0032496">
    <property type="term" value="P:response to lipopolysaccharide"/>
    <property type="evidence" value="ECO:0000266"/>
    <property type="project" value="RGD"/>
</dbReference>
<dbReference type="CDD" id="cd22244">
    <property type="entry name" value="akirin-2"/>
    <property type="match status" value="1"/>
</dbReference>
<dbReference type="InterPro" id="IPR024132">
    <property type="entry name" value="Akirin"/>
</dbReference>
<dbReference type="PANTHER" id="PTHR13293:SF8">
    <property type="entry name" value="AKIRIN-2"/>
    <property type="match status" value="1"/>
</dbReference>
<dbReference type="PANTHER" id="PTHR13293">
    <property type="entry name" value="AKIRIN-RELATED"/>
    <property type="match status" value="1"/>
</dbReference>
<evidence type="ECO:0000250" key="1">
    <source>
        <dbReference type="UniProtKB" id="B1AXD8"/>
    </source>
</evidence>
<evidence type="ECO:0000250" key="2">
    <source>
        <dbReference type="UniProtKB" id="Q53H80"/>
    </source>
</evidence>
<evidence type="ECO:0000269" key="3">
    <source>
    </source>
</evidence>
<evidence type="ECO:0000303" key="4">
    <source>
    </source>
</evidence>
<evidence type="ECO:0000305" key="5"/>
<evidence type="ECO:0000312" key="6">
    <source>
        <dbReference type="EMBL" id="BAE81786.1"/>
    </source>
</evidence>
<evidence type="ECO:0000312" key="7">
    <source>
        <dbReference type="EMBL" id="EDL98593.1"/>
    </source>
</evidence>
<evidence type="ECO:0007744" key="8">
    <source>
    </source>
</evidence>
<name>AKIR2_RAT</name>
<feature type="chain" id="PRO_0000355122" description="Akirin-2">
    <location>
        <begin position="1"/>
        <end position="201"/>
    </location>
</feature>
<feature type="short sequence motif" description="Nuclear localization signal">
    <location>
        <begin position="22"/>
        <end position="27"/>
    </location>
</feature>
<feature type="short sequence motif" description="SYVS motif" evidence="2">
    <location>
        <begin position="198"/>
        <end position="201"/>
    </location>
</feature>
<feature type="modified residue" description="Phosphoserine" evidence="2">
    <location>
        <position position="18"/>
    </location>
</feature>
<feature type="modified residue" description="Phosphoserine" evidence="8">
    <location>
        <position position="21"/>
    </location>
</feature>
<feature type="modified residue" description="Phosphoserine" evidence="1">
    <location>
        <position position="55"/>
    </location>
</feature>
<feature type="mutagenesis site" description="Abolishes binding to YWHAB. Reduces transcriptional repressor activity; when associated with A-111 and A-119." evidence="3">
    <original>S</original>
    <variation>A</variation>
    <location>
        <position position="31"/>
    </location>
</feature>
<feature type="mutagenesis site" description="Abolishes binding to YWHAB. Loss of transcriptional repressor activity; when associated with A-111; A-119 and A-131." evidence="3">
    <original>T</original>
    <variation>A</variation>
    <location>
        <position position="103"/>
    </location>
</feature>
<feature type="mutagenesis site" description="Abolishes binding to YWHAB. Loss of transcriptional repressor activity; when associated with A-103; A-119 and A-131. Reduces transcriptional repressor activity; when associated with A-31 and A-119." evidence="3">
    <original>S</original>
    <variation>A</variation>
    <location>
        <position position="111"/>
    </location>
</feature>
<feature type="mutagenesis site" description="Abolishes binding to YWHAB. Loss of transcriptional repressor activity; when associated with A-103; A-111 and A-131. Reduces transcriptional repressor activity; when associated with A-31 and A-111." evidence="3">
    <original>S</original>
    <variation>A</variation>
    <location>
        <position position="119"/>
    </location>
</feature>
<feature type="mutagenesis site" description="Abolishes binding to YWHAB. Loss of transcriptional repressor activity; when associated with A-103; A-111 and A-119." evidence="3">
    <original>S</original>
    <variation>A</variation>
    <location>
        <position position="131"/>
    </location>
</feature>
<keyword id="KW-1064">Adaptive immunity</keyword>
<keyword id="KW-0963">Cytoplasm</keyword>
<keyword id="KW-0217">Developmental protein</keyword>
<keyword id="KW-0391">Immunity</keyword>
<keyword id="KW-0399">Innate immunity</keyword>
<keyword id="KW-0472">Membrane</keyword>
<keyword id="KW-0539">Nucleus</keyword>
<keyword id="KW-0597">Phosphoprotein</keyword>
<keyword id="KW-0653">Protein transport</keyword>
<keyword id="KW-1185">Reference proteome</keyword>
<keyword id="KW-0678">Repressor</keyword>
<keyword id="KW-0804">Transcription</keyword>
<keyword id="KW-0805">Transcription regulation</keyword>
<keyword id="KW-0813">Transport</keyword>
<keyword id="KW-0832">Ubl conjugation</keyword>
<accession>Q25C79</accession>
<reference evidence="5 6" key="1">
    <citation type="journal article" date="2008" name="J. Biol. Chem.">
        <title>A novel binding factor of 14-3-3beta functions as a transcriptional repressor and promotes anchorage-independent growth, tumorigenicity, and metastasis.</title>
        <authorList>
            <person name="Komiya Y."/>
            <person name="Kurabe N."/>
            <person name="Katagiri K."/>
            <person name="Ogawa M."/>
            <person name="Sugiyama A."/>
            <person name="Kawasaki Y."/>
            <person name="Tashiro F."/>
        </authorList>
    </citation>
    <scope>NUCLEOTIDE SEQUENCE [MRNA]</scope>
    <scope>INTERACTION WITH YWHAB</scope>
    <scope>SUBCELLULAR LOCATION</scope>
    <scope>TISSUE SPECIFICITY</scope>
    <scope>MUTAGENESIS OF SER-31; THR-103; SER-111; SER-119 AND SER-131</scope>
</reference>
<reference evidence="7" key="2">
    <citation type="submission" date="2005-07" db="EMBL/GenBank/DDBJ databases">
        <authorList>
            <person name="Mural R.J."/>
            <person name="Li P.W."/>
            <person name="Adams M.D."/>
            <person name="Amanatides P.G."/>
            <person name="Baden-Tillson H."/>
            <person name="Barnstead M."/>
            <person name="Chin S.H."/>
            <person name="Dew I."/>
            <person name="Evans C.A."/>
            <person name="Ferriera S."/>
            <person name="Flanigan M."/>
            <person name="Fosler C."/>
            <person name="Glodek A."/>
            <person name="Gu Z."/>
            <person name="Holt R.A."/>
            <person name="Jennings D."/>
            <person name="Kraft C.L."/>
            <person name="Lu F."/>
            <person name="Nguyen T."/>
            <person name="Nusskern D.R."/>
            <person name="Pfannkoch C.M."/>
            <person name="Sitter C."/>
            <person name="Sutton G.G."/>
            <person name="Venter J.C."/>
            <person name="Wang Z."/>
            <person name="Woodage T."/>
            <person name="Zheng X.H."/>
            <person name="Zhong F."/>
        </authorList>
    </citation>
    <scope>NUCLEOTIDE SEQUENCE [LARGE SCALE GENOMIC DNA]</scope>
</reference>
<reference key="3">
    <citation type="journal article" date="2012" name="Nat. Commun.">
        <title>Quantitative maps of protein phosphorylation sites across 14 different rat organs and tissues.</title>
        <authorList>
            <person name="Lundby A."/>
            <person name="Secher A."/>
            <person name="Lage K."/>
            <person name="Nordsborg N.B."/>
            <person name="Dmytriyev A."/>
            <person name="Lundby C."/>
            <person name="Olsen J.V."/>
        </authorList>
    </citation>
    <scope>PHOSPHORYLATION [LARGE SCALE ANALYSIS] AT SER-21</scope>
    <scope>IDENTIFICATION BY MASS SPECTROMETRY [LARGE SCALE ANALYSIS]</scope>
</reference>
<sequence>MACGATLKRTLDFDPLLSPASPKRRRCAPLSAPASAAASPAAATAAAAASAAAASPQKYLRMEPSPFGDVSSRLTTEQILYNIKQEYKRMQKRRHLEASFQQTDPGCSSDSQPHAFLISGPASPGTSSATSSPLKKEQPLFTLRQVGMICERLLKEREEKVREEYEEILNTKLAEQYDAFVKFTHDQIMRRYGEQPASYVS</sequence>
<comment type="function">
    <text evidence="1 2">Molecular adapter that acts as a bridge between a variety of multiprotein complexes, and which is involved in embryonic development, immunity, myogenesis and brain development (By similarity). Plays a key role in nuclear protein degradation by promoting import of proteasomes into the nucleus: directly binds to fully assembled 20S proteasomes at one end and to nuclear import receptor IPO9 at the other end, bridging them together and mediating the import of pre-assembled proteasome complexes through the nuclear pore (By similarity). Involved in innate immunity by regulating the production of interleukin-6 (IL6) downstream of Toll-like receptor (TLR): acts by bridging the NF-kappa-B inhibitor NFKBIZ and the SWI/SNF complex, leading to promote induction of IL6. Also involved in adaptive immunity by promoting B-cell activation. Involved in brain development: required for the survival and proliferation of cerebral cortical progenitor cells. Involved in myogenesis: required for skeletal muscle formation and skeletal development, possibly by regulating expression of muscle differentiation factors. Also plays a role in facilitating interdigital tissue regression during limb development (By similarity).</text>
</comment>
<comment type="subunit">
    <text evidence="1 2 3">Homodimer. Interacts with IPO9; the interaction is direct. Associates with 20S and 26S proteasomes (By similarity). Interacts with SMARCD1; promoting SWI/SNF complex recruitment. Interacts with NFKBIZ (By similarity). Interacts with YWHAB (PubMed:18460465).</text>
</comment>
<comment type="subcellular location">
    <subcellularLocation>
        <location evidence="3">Nucleus</location>
    </subcellularLocation>
    <subcellularLocation>
        <location evidence="1">Cytoplasm</location>
    </subcellularLocation>
    <subcellularLocation>
        <location evidence="1">Membrane</location>
    </subcellularLocation>
    <text evidence="1">Present mainly in the nuclear fraction, and at much lower level in the cytoplasmic and membrane fractions.</text>
</comment>
<comment type="tissue specificity">
    <text evidence="3">Highly expressed in testis, cerebrum and cerebellum, and barely detectable in liver, heart, spleen and muscle. Also highly expressed in various tumor cells from hepatoma, glioblastoma and pheochromocytoma.</text>
</comment>
<comment type="PTM">
    <text evidence="2">Polyubiquitinated. Polyubiquitination is dependent of UBR5 that extends pre-ubiquitinated AKIRIN2.</text>
</comment>
<comment type="similarity">
    <text evidence="5">Belongs to the akirin family.</text>
</comment>